<accession>Q6BZT5</accession>
<protein>
    <recommendedName>
        <fullName evidence="1">mRNA cleavage and polyadenylation factor CLP1</fullName>
    </recommendedName>
</protein>
<reference key="1">
    <citation type="journal article" date="2004" name="Nature">
        <title>Genome evolution in yeasts.</title>
        <authorList>
            <person name="Dujon B."/>
            <person name="Sherman D."/>
            <person name="Fischer G."/>
            <person name="Durrens P."/>
            <person name="Casaregola S."/>
            <person name="Lafontaine I."/>
            <person name="de Montigny J."/>
            <person name="Marck C."/>
            <person name="Neuveglise C."/>
            <person name="Talla E."/>
            <person name="Goffard N."/>
            <person name="Frangeul L."/>
            <person name="Aigle M."/>
            <person name="Anthouard V."/>
            <person name="Babour A."/>
            <person name="Barbe V."/>
            <person name="Barnay S."/>
            <person name="Blanchin S."/>
            <person name="Beckerich J.-M."/>
            <person name="Beyne E."/>
            <person name="Bleykasten C."/>
            <person name="Boisrame A."/>
            <person name="Boyer J."/>
            <person name="Cattolico L."/>
            <person name="Confanioleri F."/>
            <person name="de Daruvar A."/>
            <person name="Despons L."/>
            <person name="Fabre E."/>
            <person name="Fairhead C."/>
            <person name="Ferry-Dumazet H."/>
            <person name="Groppi A."/>
            <person name="Hantraye F."/>
            <person name="Hennequin C."/>
            <person name="Jauniaux N."/>
            <person name="Joyet P."/>
            <person name="Kachouri R."/>
            <person name="Kerrest A."/>
            <person name="Koszul R."/>
            <person name="Lemaire M."/>
            <person name="Lesur I."/>
            <person name="Ma L."/>
            <person name="Muller H."/>
            <person name="Nicaud J.-M."/>
            <person name="Nikolski M."/>
            <person name="Oztas S."/>
            <person name="Ozier-Kalogeropoulos O."/>
            <person name="Pellenz S."/>
            <person name="Potier S."/>
            <person name="Richard G.-F."/>
            <person name="Straub M.-L."/>
            <person name="Suleau A."/>
            <person name="Swennen D."/>
            <person name="Tekaia F."/>
            <person name="Wesolowski-Louvel M."/>
            <person name="Westhof E."/>
            <person name="Wirth B."/>
            <person name="Zeniou-Meyer M."/>
            <person name="Zivanovic Y."/>
            <person name="Bolotin-Fukuhara M."/>
            <person name="Thierry A."/>
            <person name="Bouchier C."/>
            <person name="Caudron B."/>
            <person name="Scarpelli C."/>
            <person name="Gaillardin C."/>
            <person name="Weissenbach J."/>
            <person name="Wincker P."/>
            <person name="Souciet J.-L."/>
        </authorList>
    </citation>
    <scope>NUCLEOTIDE SEQUENCE [LARGE SCALE GENOMIC DNA]</scope>
    <source>
        <strain>CLIB 122 / E 150</strain>
    </source>
</reference>
<evidence type="ECO:0000255" key="1">
    <source>
        <dbReference type="HAMAP-Rule" id="MF_03035"/>
    </source>
</evidence>
<evidence type="ECO:0000305" key="2"/>
<feature type="chain" id="PRO_0000375218" description="mRNA cleavage and polyadenylation factor CLP1">
    <location>
        <begin position="1"/>
        <end position="450"/>
    </location>
</feature>
<feature type="binding site" evidence="1">
    <location>
        <position position="29"/>
    </location>
    <ligand>
        <name>ATP</name>
        <dbReference type="ChEBI" id="CHEBI:30616"/>
    </ligand>
</feature>
<feature type="binding site" evidence="1">
    <location>
        <position position="67"/>
    </location>
    <ligand>
        <name>ATP</name>
        <dbReference type="ChEBI" id="CHEBI:30616"/>
    </ligand>
</feature>
<feature type="binding site" evidence="1">
    <location>
        <begin position="137"/>
        <end position="142"/>
    </location>
    <ligand>
        <name>ATP</name>
        <dbReference type="ChEBI" id="CHEBI:30616"/>
    </ligand>
</feature>
<proteinExistence type="inferred from homology"/>
<organism>
    <name type="scientific">Yarrowia lipolytica (strain CLIB 122 / E 150)</name>
    <name type="common">Yeast</name>
    <name type="synonym">Candida lipolytica</name>
    <dbReference type="NCBI Taxonomy" id="284591"/>
    <lineage>
        <taxon>Eukaryota</taxon>
        <taxon>Fungi</taxon>
        <taxon>Dikarya</taxon>
        <taxon>Ascomycota</taxon>
        <taxon>Saccharomycotina</taxon>
        <taxon>Dipodascomycetes</taxon>
        <taxon>Dipodascales</taxon>
        <taxon>Dipodascales incertae sedis</taxon>
        <taxon>Yarrowia</taxon>
    </lineage>
</organism>
<name>CLP1_YARLI</name>
<gene>
    <name evidence="1" type="primary">CLP1</name>
    <name type="ordered locus">YALI0F31031g</name>
</gene>
<dbReference type="EMBL" id="CR382132">
    <property type="protein sequence ID" value="CAG78890.1"/>
    <property type="molecule type" value="Genomic_DNA"/>
</dbReference>
<dbReference type="RefSeq" id="XP_506077.1">
    <property type="nucleotide sequence ID" value="XM_506077.1"/>
</dbReference>
<dbReference type="SMR" id="Q6BZT5"/>
<dbReference type="FunCoup" id="Q6BZT5">
    <property type="interactions" value="827"/>
</dbReference>
<dbReference type="STRING" id="284591.Q6BZT5"/>
<dbReference type="EnsemblFungi" id="CAG78890">
    <property type="protein sequence ID" value="CAG78890"/>
    <property type="gene ID" value="YALI0_F31031g"/>
</dbReference>
<dbReference type="KEGG" id="yli:2907659"/>
<dbReference type="VEuPathDB" id="FungiDB:YALI0_F31031g"/>
<dbReference type="HOGENOM" id="CLU_018195_3_1_1"/>
<dbReference type="InParanoid" id="Q6BZT5"/>
<dbReference type="OMA" id="VQYVNCH"/>
<dbReference type="OrthoDB" id="74523at4891"/>
<dbReference type="Proteomes" id="UP000001300">
    <property type="component" value="Chromosome F"/>
</dbReference>
<dbReference type="GO" id="GO:0005849">
    <property type="term" value="C:mRNA cleavage factor complex"/>
    <property type="evidence" value="ECO:0007669"/>
    <property type="project" value="UniProtKB-UniRule"/>
</dbReference>
<dbReference type="GO" id="GO:0005634">
    <property type="term" value="C:nucleus"/>
    <property type="evidence" value="ECO:0000318"/>
    <property type="project" value="GO_Central"/>
</dbReference>
<dbReference type="GO" id="GO:0005524">
    <property type="term" value="F:ATP binding"/>
    <property type="evidence" value="ECO:0007669"/>
    <property type="project" value="UniProtKB-UniRule"/>
</dbReference>
<dbReference type="GO" id="GO:0051731">
    <property type="term" value="F:polynucleotide 5'-hydroxyl-kinase activity"/>
    <property type="evidence" value="ECO:0000318"/>
    <property type="project" value="GO_Central"/>
</dbReference>
<dbReference type="GO" id="GO:0031124">
    <property type="term" value="P:mRNA 3'-end processing"/>
    <property type="evidence" value="ECO:0007669"/>
    <property type="project" value="UniProtKB-UniRule"/>
</dbReference>
<dbReference type="GO" id="GO:0006388">
    <property type="term" value="P:tRNA splicing, via endonucleolytic cleavage and ligation"/>
    <property type="evidence" value="ECO:0000318"/>
    <property type="project" value="GO_Central"/>
</dbReference>
<dbReference type="Gene3D" id="2.60.120.1030">
    <property type="entry name" value="Clp1, DNA binding domain"/>
    <property type="match status" value="1"/>
</dbReference>
<dbReference type="Gene3D" id="3.40.50.300">
    <property type="entry name" value="P-loop containing nucleotide triphosphate hydrolases"/>
    <property type="match status" value="1"/>
</dbReference>
<dbReference type="Gene3D" id="2.40.30.330">
    <property type="entry name" value="Pre-mRNA cleavage complex subunit Clp1, C-terminal domain"/>
    <property type="match status" value="1"/>
</dbReference>
<dbReference type="HAMAP" id="MF_03035">
    <property type="entry name" value="Clp1"/>
    <property type="match status" value="1"/>
</dbReference>
<dbReference type="InterPro" id="IPR028606">
    <property type="entry name" value="Clp1"/>
</dbReference>
<dbReference type="InterPro" id="IPR045116">
    <property type="entry name" value="Clp1/Grc3"/>
</dbReference>
<dbReference type="InterPro" id="IPR010655">
    <property type="entry name" value="Clp1_C"/>
</dbReference>
<dbReference type="InterPro" id="IPR038238">
    <property type="entry name" value="Clp1_C_sf"/>
</dbReference>
<dbReference type="InterPro" id="IPR032324">
    <property type="entry name" value="Clp1_N"/>
</dbReference>
<dbReference type="InterPro" id="IPR038239">
    <property type="entry name" value="Clp1_N_sf"/>
</dbReference>
<dbReference type="InterPro" id="IPR032319">
    <property type="entry name" value="CLP1_P"/>
</dbReference>
<dbReference type="InterPro" id="IPR027417">
    <property type="entry name" value="P-loop_NTPase"/>
</dbReference>
<dbReference type="PANTHER" id="PTHR12755">
    <property type="entry name" value="CLEAVAGE/POLYADENYLATION FACTOR IA SUBUNIT CLP1P"/>
    <property type="match status" value="1"/>
</dbReference>
<dbReference type="PANTHER" id="PTHR12755:SF6">
    <property type="entry name" value="POLYRIBONUCLEOTIDE 5'-HYDROXYL-KINASE CLP1"/>
    <property type="match status" value="1"/>
</dbReference>
<dbReference type="Pfam" id="PF06807">
    <property type="entry name" value="Clp1"/>
    <property type="match status" value="1"/>
</dbReference>
<dbReference type="Pfam" id="PF16573">
    <property type="entry name" value="CLP1_N"/>
    <property type="match status" value="1"/>
</dbReference>
<dbReference type="Pfam" id="PF16575">
    <property type="entry name" value="CLP1_P"/>
    <property type="match status" value="1"/>
</dbReference>
<dbReference type="SUPFAM" id="SSF52540">
    <property type="entry name" value="P-loop containing nucleoside triphosphate hydrolases"/>
    <property type="match status" value="2"/>
</dbReference>
<keyword id="KW-0067">ATP-binding</keyword>
<keyword id="KW-0507">mRNA processing</keyword>
<keyword id="KW-0547">Nucleotide-binding</keyword>
<keyword id="KW-0539">Nucleus</keyword>
<keyword id="KW-1185">Reference proteome</keyword>
<sequence>MSLPGLNFSTTETNTTESTHTIDLKPETEWRYEVAIGGTLHVTLKSGTAEIFGTELPPNKELSIQGKGSIYTWQGCQFVYTAIAGPKGLMSDYTTEDTPHMTMAINLHFALEKMRNEAEQKPKDVAGPRVLIAGPPNSGKTSLAKILLAYATKCDRKPIYISLDPTSVNLGPPGGVHAVQITDLLDVETYGGFGSSEISGPQKLQPLILLSKYFGLEKTTDNFKLFKRSVAQLAVPVLSKLAHDVEAQKSGLIIDTPRVPGNQNKTIEVNLLTDVVSDFGVNVIVVIGNDRLYADLMKKYPVGASGPTVVKVPAFACMDDDESYNRDAQQQEIQQYFYGDAKDMKLGPRIVTVDFSTLHVYKIKPSTQFDDDKADMLERVAEANILPNTVLTVMHAVPGSSEKEILDSEVQGYLHVTEVDEEKNKVKILTPVPGRLPSQVMLLGDTRYHE</sequence>
<comment type="function">
    <text evidence="1">Required for endonucleolytic cleavage during polyadenylation-dependent pre-mRNA 3'-end formation.</text>
</comment>
<comment type="subunit">
    <text evidence="1">Component of a pre-mRNA cleavage factor complex. Interacts directly with PCF11.</text>
</comment>
<comment type="subcellular location">
    <subcellularLocation>
        <location evidence="1">Nucleus</location>
    </subcellularLocation>
</comment>
<comment type="similarity">
    <text evidence="1">Belongs to the Clp1 family. Clp1 subfamily.</text>
</comment>
<comment type="caution">
    <text evidence="2">May lack the polyribonucleotide 5'-hydroxyl-kinase and polynucleotide 5'-hydroxyl-kinase activities that are characteristic of the human ortholog.</text>
</comment>